<dbReference type="EMBL" id="CP001601">
    <property type="protein sequence ID" value="ACP31989.1"/>
    <property type="molecule type" value="Genomic_DNA"/>
</dbReference>
<dbReference type="RefSeq" id="WP_010189650.1">
    <property type="nucleotide sequence ID" value="NZ_ACLH01000066.1"/>
</dbReference>
<dbReference type="SMR" id="C3PKQ3"/>
<dbReference type="STRING" id="548476.cauri_0390"/>
<dbReference type="GeneID" id="31923009"/>
<dbReference type="KEGG" id="car:cauri_0390"/>
<dbReference type="eggNOG" id="COG0088">
    <property type="taxonomic scope" value="Bacteria"/>
</dbReference>
<dbReference type="HOGENOM" id="CLU_041575_5_0_11"/>
<dbReference type="OrthoDB" id="9803201at2"/>
<dbReference type="Proteomes" id="UP000002077">
    <property type="component" value="Chromosome"/>
</dbReference>
<dbReference type="GO" id="GO:1990904">
    <property type="term" value="C:ribonucleoprotein complex"/>
    <property type="evidence" value="ECO:0007669"/>
    <property type="project" value="UniProtKB-KW"/>
</dbReference>
<dbReference type="GO" id="GO:0005840">
    <property type="term" value="C:ribosome"/>
    <property type="evidence" value="ECO:0007669"/>
    <property type="project" value="UniProtKB-KW"/>
</dbReference>
<dbReference type="GO" id="GO:0019843">
    <property type="term" value="F:rRNA binding"/>
    <property type="evidence" value="ECO:0007669"/>
    <property type="project" value="UniProtKB-UniRule"/>
</dbReference>
<dbReference type="GO" id="GO:0003735">
    <property type="term" value="F:structural constituent of ribosome"/>
    <property type="evidence" value="ECO:0007669"/>
    <property type="project" value="InterPro"/>
</dbReference>
<dbReference type="GO" id="GO:0006412">
    <property type="term" value="P:translation"/>
    <property type="evidence" value="ECO:0007669"/>
    <property type="project" value="UniProtKB-UniRule"/>
</dbReference>
<dbReference type="FunFam" id="3.40.1370.10:FF:000004">
    <property type="entry name" value="50S ribosomal protein L4"/>
    <property type="match status" value="1"/>
</dbReference>
<dbReference type="Gene3D" id="3.40.1370.10">
    <property type="match status" value="1"/>
</dbReference>
<dbReference type="HAMAP" id="MF_01328_B">
    <property type="entry name" value="Ribosomal_uL4_B"/>
    <property type="match status" value="1"/>
</dbReference>
<dbReference type="InterPro" id="IPR002136">
    <property type="entry name" value="Ribosomal_uL4"/>
</dbReference>
<dbReference type="InterPro" id="IPR013005">
    <property type="entry name" value="Ribosomal_uL4-like"/>
</dbReference>
<dbReference type="InterPro" id="IPR023574">
    <property type="entry name" value="Ribosomal_uL4_dom_sf"/>
</dbReference>
<dbReference type="NCBIfam" id="TIGR03953">
    <property type="entry name" value="rplD_bact"/>
    <property type="match status" value="1"/>
</dbReference>
<dbReference type="PANTHER" id="PTHR10746">
    <property type="entry name" value="50S RIBOSOMAL PROTEIN L4"/>
    <property type="match status" value="1"/>
</dbReference>
<dbReference type="PANTHER" id="PTHR10746:SF6">
    <property type="entry name" value="LARGE RIBOSOMAL SUBUNIT PROTEIN UL4M"/>
    <property type="match status" value="1"/>
</dbReference>
<dbReference type="Pfam" id="PF00573">
    <property type="entry name" value="Ribosomal_L4"/>
    <property type="match status" value="1"/>
</dbReference>
<dbReference type="SUPFAM" id="SSF52166">
    <property type="entry name" value="Ribosomal protein L4"/>
    <property type="match status" value="1"/>
</dbReference>
<reference key="1">
    <citation type="journal article" date="2010" name="BMC Genomics">
        <title>Complete genome sequence and lifestyle of black-pigmented Corynebacterium aurimucosum ATCC 700975 (formerly C. nigricans CN-1) isolated from a vaginal swab of a woman with spontaneous abortion.</title>
        <authorList>
            <person name="Trost E."/>
            <person name="Gotker S."/>
            <person name="Schneider J."/>
            <person name="Schneiker-Bekel S."/>
            <person name="Szczepanowski R."/>
            <person name="Tilker A."/>
            <person name="Viehoever P."/>
            <person name="Arnold W."/>
            <person name="Bekel T."/>
            <person name="Blom J."/>
            <person name="Gartemann K.H."/>
            <person name="Linke B."/>
            <person name="Goesmann A."/>
            <person name="Puhler A."/>
            <person name="Shukla S.K."/>
            <person name="Tauch A."/>
        </authorList>
    </citation>
    <scope>NUCLEOTIDE SEQUENCE [LARGE SCALE GENOMIC DNA]</scope>
    <source>
        <strain>ATCC 700975 / DSM 44827 / CIP 107346 / CN-1</strain>
    </source>
</reference>
<comment type="function">
    <text evidence="1">One of the primary rRNA binding proteins, this protein initially binds near the 5'-end of the 23S rRNA. It is important during the early stages of 50S assembly. It makes multiple contacts with different domains of the 23S rRNA in the assembled 50S subunit and ribosome.</text>
</comment>
<comment type="function">
    <text evidence="1">Forms part of the polypeptide exit tunnel.</text>
</comment>
<comment type="subunit">
    <text evidence="1">Part of the 50S ribosomal subunit.</text>
</comment>
<comment type="similarity">
    <text evidence="1">Belongs to the universal ribosomal protein uL4 family.</text>
</comment>
<sequence>MSNLKLDVQTADGKTNGTVELPAELFDTEASIALMHQVVNAQLAAARQGTHKTKTRGEVRGGGRKPFRQKGTGRARQGSIRAPHYTGGGTVHGPVPRDYSQRTPKRMIKAALYGALSDRARNERIHVIEELVPGQTPSTKQAKAFIERLTDRKNVLLVIGREDINARRSANNLPNVQILDAGQLNTYDVLYSDDVVFSVEALHTFVERATGAAEEAKEEK</sequence>
<feature type="chain" id="PRO_1000165999" description="Large ribosomal subunit protein uL4">
    <location>
        <begin position="1"/>
        <end position="220"/>
    </location>
</feature>
<feature type="region of interest" description="Disordered" evidence="2">
    <location>
        <begin position="45"/>
        <end position="102"/>
    </location>
</feature>
<feature type="compositionally biased region" description="Basic residues" evidence="2">
    <location>
        <begin position="62"/>
        <end position="73"/>
    </location>
</feature>
<keyword id="KW-1185">Reference proteome</keyword>
<keyword id="KW-0687">Ribonucleoprotein</keyword>
<keyword id="KW-0689">Ribosomal protein</keyword>
<keyword id="KW-0694">RNA-binding</keyword>
<keyword id="KW-0699">rRNA-binding</keyword>
<evidence type="ECO:0000255" key="1">
    <source>
        <dbReference type="HAMAP-Rule" id="MF_01328"/>
    </source>
</evidence>
<evidence type="ECO:0000256" key="2">
    <source>
        <dbReference type="SAM" id="MobiDB-lite"/>
    </source>
</evidence>
<evidence type="ECO:0000305" key="3"/>
<gene>
    <name evidence="1" type="primary">rplD</name>
    <name type="ordered locus">cauri_0390</name>
</gene>
<name>RL4_CORA7</name>
<protein>
    <recommendedName>
        <fullName evidence="1">Large ribosomal subunit protein uL4</fullName>
    </recommendedName>
    <alternativeName>
        <fullName evidence="3">50S ribosomal protein L4</fullName>
    </alternativeName>
</protein>
<organism>
    <name type="scientific">Corynebacterium aurimucosum (strain ATCC 700975 / DSM 44827 / CIP 107346 / CN-1)</name>
    <name type="common">Corynebacterium nigricans</name>
    <dbReference type="NCBI Taxonomy" id="548476"/>
    <lineage>
        <taxon>Bacteria</taxon>
        <taxon>Bacillati</taxon>
        <taxon>Actinomycetota</taxon>
        <taxon>Actinomycetes</taxon>
        <taxon>Mycobacteriales</taxon>
        <taxon>Corynebacteriaceae</taxon>
        <taxon>Corynebacterium</taxon>
    </lineage>
</organism>
<proteinExistence type="inferred from homology"/>
<accession>C3PKQ3</accession>